<organism>
    <name type="scientific">Escherichia coli O7:K1 (strain IAI39 / ExPEC)</name>
    <dbReference type="NCBI Taxonomy" id="585057"/>
    <lineage>
        <taxon>Bacteria</taxon>
        <taxon>Pseudomonadati</taxon>
        <taxon>Pseudomonadota</taxon>
        <taxon>Gammaproteobacteria</taxon>
        <taxon>Enterobacterales</taxon>
        <taxon>Enterobacteriaceae</taxon>
        <taxon>Escherichia</taxon>
    </lineage>
</organism>
<evidence type="ECO:0000255" key="1">
    <source>
        <dbReference type="HAMAP-Rule" id="MF_00540"/>
    </source>
</evidence>
<accession>B7NU11</accession>
<name>ADD_ECO7I</name>
<gene>
    <name evidence="1" type="primary">add</name>
    <name type="ordered locus">ECIAI39_1434</name>
</gene>
<sequence length="333" mass="36374">MIDTTLPLTDIHRHLDGNIRPQTILELGRQYNISLPAQSLETLIPHVQVIANEPDLVSFLTKLDWGVKVLASLDACRRVAFENIEDAARHGLHYVELRFSPGYMAMAHQLPVAGVVEAVIDGVCEGCRTFGVQAKLIGIMSRTFGEAACQQELEAFLAHRDQITALDLAGDELGFPGSLFLSHFNRARDAGWHITVHAGEAAGPESIWQAIRELGAERIGHGVKAIEDRALMDFLAEQQIGIESCLTSNIQTSTVAELAAHPLKMFLEHGIRASINTDDPGVQGVDIIHEYTVAAPAAGLSREQIRQAQINGLEMAFLSAEEKRALREKVAAK</sequence>
<keyword id="KW-0378">Hydrolase</keyword>
<keyword id="KW-0479">Metal-binding</keyword>
<keyword id="KW-0546">Nucleotide metabolism</keyword>
<keyword id="KW-0862">Zinc</keyword>
<dbReference type="EC" id="3.5.4.4" evidence="1"/>
<dbReference type="EMBL" id="CU928164">
    <property type="protein sequence ID" value="CAR17567.1"/>
    <property type="molecule type" value="Genomic_DNA"/>
</dbReference>
<dbReference type="RefSeq" id="WP_000567484.1">
    <property type="nucleotide sequence ID" value="NC_011750.1"/>
</dbReference>
<dbReference type="RefSeq" id="YP_002407439.1">
    <property type="nucleotide sequence ID" value="NC_011750.1"/>
</dbReference>
<dbReference type="SMR" id="B7NU11"/>
<dbReference type="STRING" id="585057.ECIAI39_1434"/>
<dbReference type="KEGG" id="ect:ECIAI39_1434"/>
<dbReference type="PATRIC" id="fig|585057.6.peg.1499"/>
<dbReference type="HOGENOM" id="CLU_039228_0_2_6"/>
<dbReference type="Proteomes" id="UP000000749">
    <property type="component" value="Chromosome"/>
</dbReference>
<dbReference type="GO" id="GO:0005829">
    <property type="term" value="C:cytosol"/>
    <property type="evidence" value="ECO:0007669"/>
    <property type="project" value="TreeGrafter"/>
</dbReference>
<dbReference type="GO" id="GO:0046936">
    <property type="term" value="F:2'-deoxyadenosine deaminase activity"/>
    <property type="evidence" value="ECO:0007669"/>
    <property type="project" value="RHEA"/>
</dbReference>
<dbReference type="GO" id="GO:0004000">
    <property type="term" value="F:adenosine deaminase activity"/>
    <property type="evidence" value="ECO:0007669"/>
    <property type="project" value="UniProtKB-UniRule"/>
</dbReference>
<dbReference type="GO" id="GO:0008270">
    <property type="term" value="F:zinc ion binding"/>
    <property type="evidence" value="ECO:0007669"/>
    <property type="project" value="UniProtKB-UniRule"/>
</dbReference>
<dbReference type="GO" id="GO:0006154">
    <property type="term" value="P:adenosine catabolic process"/>
    <property type="evidence" value="ECO:0007669"/>
    <property type="project" value="TreeGrafter"/>
</dbReference>
<dbReference type="GO" id="GO:0043103">
    <property type="term" value="P:hypoxanthine salvage"/>
    <property type="evidence" value="ECO:0007669"/>
    <property type="project" value="TreeGrafter"/>
</dbReference>
<dbReference type="GO" id="GO:0046103">
    <property type="term" value="P:inosine biosynthetic process"/>
    <property type="evidence" value="ECO:0007669"/>
    <property type="project" value="TreeGrafter"/>
</dbReference>
<dbReference type="GO" id="GO:0009117">
    <property type="term" value="P:nucleotide metabolic process"/>
    <property type="evidence" value="ECO:0007669"/>
    <property type="project" value="UniProtKB-KW"/>
</dbReference>
<dbReference type="GO" id="GO:0009168">
    <property type="term" value="P:purine ribonucleoside monophosphate biosynthetic process"/>
    <property type="evidence" value="ECO:0007669"/>
    <property type="project" value="UniProtKB-UniRule"/>
</dbReference>
<dbReference type="CDD" id="cd01320">
    <property type="entry name" value="ADA"/>
    <property type="match status" value="1"/>
</dbReference>
<dbReference type="FunFam" id="3.20.20.140:FF:000009">
    <property type="entry name" value="Adenosine deaminase"/>
    <property type="match status" value="1"/>
</dbReference>
<dbReference type="Gene3D" id="3.20.20.140">
    <property type="entry name" value="Metal-dependent hydrolases"/>
    <property type="match status" value="1"/>
</dbReference>
<dbReference type="HAMAP" id="MF_00540">
    <property type="entry name" value="A_deaminase"/>
    <property type="match status" value="1"/>
</dbReference>
<dbReference type="InterPro" id="IPR006650">
    <property type="entry name" value="A/AMP_deam_AS"/>
</dbReference>
<dbReference type="InterPro" id="IPR028893">
    <property type="entry name" value="A_deaminase"/>
</dbReference>
<dbReference type="InterPro" id="IPR001365">
    <property type="entry name" value="A_deaminase_dom"/>
</dbReference>
<dbReference type="InterPro" id="IPR006330">
    <property type="entry name" value="Ado/ade_deaminase"/>
</dbReference>
<dbReference type="InterPro" id="IPR032466">
    <property type="entry name" value="Metal_Hydrolase"/>
</dbReference>
<dbReference type="NCBIfam" id="TIGR01430">
    <property type="entry name" value="aden_deam"/>
    <property type="match status" value="1"/>
</dbReference>
<dbReference type="NCBIfam" id="NF006846">
    <property type="entry name" value="PRK09358.1-1"/>
    <property type="match status" value="1"/>
</dbReference>
<dbReference type="PANTHER" id="PTHR11409">
    <property type="entry name" value="ADENOSINE DEAMINASE"/>
    <property type="match status" value="1"/>
</dbReference>
<dbReference type="PANTHER" id="PTHR11409:SF43">
    <property type="entry name" value="ADENOSINE DEAMINASE"/>
    <property type="match status" value="1"/>
</dbReference>
<dbReference type="Pfam" id="PF00962">
    <property type="entry name" value="A_deaminase"/>
    <property type="match status" value="1"/>
</dbReference>
<dbReference type="SUPFAM" id="SSF51556">
    <property type="entry name" value="Metallo-dependent hydrolases"/>
    <property type="match status" value="1"/>
</dbReference>
<dbReference type="PROSITE" id="PS00485">
    <property type="entry name" value="A_DEAMINASE"/>
    <property type="match status" value="1"/>
</dbReference>
<feature type="chain" id="PRO_1000128841" description="Adenosine deaminase">
    <location>
        <begin position="1"/>
        <end position="333"/>
    </location>
</feature>
<feature type="active site" description="Proton donor" evidence="1">
    <location>
        <position position="200"/>
    </location>
</feature>
<feature type="binding site" evidence="1">
    <location>
        <position position="12"/>
    </location>
    <ligand>
        <name>Zn(2+)</name>
        <dbReference type="ChEBI" id="CHEBI:29105"/>
        <note>catalytic</note>
    </ligand>
</feature>
<feature type="binding site" evidence="1">
    <location>
        <position position="14"/>
    </location>
    <ligand>
        <name>substrate</name>
    </ligand>
</feature>
<feature type="binding site" evidence="1">
    <location>
        <position position="14"/>
    </location>
    <ligand>
        <name>Zn(2+)</name>
        <dbReference type="ChEBI" id="CHEBI:29105"/>
        <note>catalytic</note>
    </ligand>
</feature>
<feature type="binding site" evidence="1">
    <location>
        <position position="16"/>
    </location>
    <ligand>
        <name>substrate</name>
    </ligand>
</feature>
<feature type="binding site" evidence="1">
    <location>
        <position position="170"/>
    </location>
    <ligand>
        <name>substrate</name>
    </ligand>
</feature>
<feature type="binding site" evidence="1">
    <location>
        <position position="197"/>
    </location>
    <ligand>
        <name>Zn(2+)</name>
        <dbReference type="ChEBI" id="CHEBI:29105"/>
        <note>catalytic</note>
    </ligand>
</feature>
<feature type="binding site" evidence="1">
    <location>
        <position position="278"/>
    </location>
    <ligand>
        <name>Zn(2+)</name>
        <dbReference type="ChEBI" id="CHEBI:29105"/>
        <note>catalytic</note>
    </ligand>
</feature>
<feature type="binding site" evidence="1">
    <location>
        <position position="279"/>
    </location>
    <ligand>
        <name>substrate</name>
    </ligand>
</feature>
<feature type="site" description="Important for catalytic activity" evidence="1">
    <location>
        <position position="221"/>
    </location>
</feature>
<protein>
    <recommendedName>
        <fullName evidence="1">Adenosine deaminase</fullName>
        <ecNumber evidence="1">3.5.4.4</ecNumber>
    </recommendedName>
    <alternativeName>
        <fullName evidence="1">Adenosine aminohydrolase</fullName>
    </alternativeName>
</protein>
<reference key="1">
    <citation type="journal article" date="2009" name="PLoS Genet.">
        <title>Organised genome dynamics in the Escherichia coli species results in highly diverse adaptive paths.</title>
        <authorList>
            <person name="Touchon M."/>
            <person name="Hoede C."/>
            <person name="Tenaillon O."/>
            <person name="Barbe V."/>
            <person name="Baeriswyl S."/>
            <person name="Bidet P."/>
            <person name="Bingen E."/>
            <person name="Bonacorsi S."/>
            <person name="Bouchier C."/>
            <person name="Bouvet O."/>
            <person name="Calteau A."/>
            <person name="Chiapello H."/>
            <person name="Clermont O."/>
            <person name="Cruveiller S."/>
            <person name="Danchin A."/>
            <person name="Diard M."/>
            <person name="Dossat C."/>
            <person name="Karoui M.E."/>
            <person name="Frapy E."/>
            <person name="Garry L."/>
            <person name="Ghigo J.M."/>
            <person name="Gilles A.M."/>
            <person name="Johnson J."/>
            <person name="Le Bouguenec C."/>
            <person name="Lescat M."/>
            <person name="Mangenot S."/>
            <person name="Martinez-Jehanne V."/>
            <person name="Matic I."/>
            <person name="Nassif X."/>
            <person name="Oztas S."/>
            <person name="Petit M.A."/>
            <person name="Pichon C."/>
            <person name="Rouy Z."/>
            <person name="Ruf C.S."/>
            <person name="Schneider D."/>
            <person name="Tourret J."/>
            <person name="Vacherie B."/>
            <person name="Vallenet D."/>
            <person name="Medigue C."/>
            <person name="Rocha E.P.C."/>
            <person name="Denamur E."/>
        </authorList>
    </citation>
    <scope>NUCLEOTIDE SEQUENCE [LARGE SCALE GENOMIC DNA]</scope>
    <source>
        <strain>IAI39 / ExPEC</strain>
    </source>
</reference>
<comment type="function">
    <text evidence="1">Catalyzes the hydrolytic deamination of adenosine and 2-deoxyadenosine.</text>
</comment>
<comment type="catalytic activity">
    <reaction evidence="1">
        <text>adenosine + H2O + H(+) = inosine + NH4(+)</text>
        <dbReference type="Rhea" id="RHEA:24408"/>
        <dbReference type="ChEBI" id="CHEBI:15377"/>
        <dbReference type="ChEBI" id="CHEBI:15378"/>
        <dbReference type="ChEBI" id="CHEBI:16335"/>
        <dbReference type="ChEBI" id="CHEBI:17596"/>
        <dbReference type="ChEBI" id="CHEBI:28938"/>
        <dbReference type="EC" id="3.5.4.4"/>
    </reaction>
    <physiologicalReaction direction="left-to-right" evidence="1">
        <dbReference type="Rhea" id="RHEA:24409"/>
    </physiologicalReaction>
</comment>
<comment type="catalytic activity">
    <reaction evidence="1">
        <text>2'-deoxyadenosine + H2O + H(+) = 2'-deoxyinosine + NH4(+)</text>
        <dbReference type="Rhea" id="RHEA:28190"/>
        <dbReference type="ChEBI" id="CHEBI:15377"/>
        <dbReference type="ChEBI" id="CHEBI:15378"/>
        <dbReference type="ChEBI" id="CHEBI:17256"/>
        <dbReference type="ChEBI" id="CHEBI:28938"/>
        <dbReference type="ChEBI" id="CHEBI:28997"/>
        <dbReference type="EC" id="3.5.4.4"/>
    </reaction>
    <physiologicalReaction direction="left-to-right" evidence="1">
        <dbReference type="Rhea" id="RHEA:28191"/>
    </physiologicalReaction>
</comment>
<comment type="cofactor">
    <cofactor evidence="1">
        <name>Zn(2+)</name>
        <dbReference type="ChEBI" id="CHEBI:29105"/>
    </cofactor>
    <text evidence="1">Binds 1 zinc ion per subunit.</text>
</comment>
<comment type="similarity">
    <text evidence="1">Belongs to the metallo-dependent hydrolases superfamily. Adenosine and AMP deaminases family. Adenosine deaminase subfamily.</text>
</comment>
<proteinExistence type="inferred from homology"/>